<reference key="1">
    <citation type="submission" date="2007-09" db="EMBL/GenBank/DDBJ databases">
        <title>Complete sequence of chromosome of Serratia proteamaculans 568.</title>
        <authorList>
            <consortium name="US DOE Joint Genome Institute"/>
            <person name="Copeland A."/>
            <person name="Lucas S."/>
            <person name="Lapidus A."/>
            <person name="Barry K."/>
            <person name="Glavina del Rio T."/>
            <person name="Dalin E."/>
            <person name="Tice H."/>
            <person name="Pitluck S."/>
            <person name="Chain P."/>
            <person name="Malfatti S."/>
            <person name="Shin M."/>
            <person name="Vergez L."/>
            <person name="Schmutz J."/>
            <person name="Larimer F."/>
            <person name="Land M."/>
            <person name="Hauser L."/>
            <person name="Kyrpides N."/>
            <person name="Kim E."/>
            <person name="Taghavi S."/>
            <person name="Newman L."/>
            <person name="Vangronsveld J."/>
            <person name="van der Lelie D."/>
            <person name="Richardson P."/>
        </authorList>
    </citation>
    <scope>NUCLEOTIDE SEQUENCE [LARGE SCALE GENOMIC DNA]</scope>
    <source>
        <strain>568</strain>
    </source>
</reference>
<feature type="chain" id="PRO_0000321692" description="Rhomboid protease GlpG">
    <location>
        <begin position="1"/>
        <end position="278"/>
    </location>
</feature>
<feature type="transmembrane region" description="Helical" evidence="1">
    <location>
        <begin position="95"/>
        <end position="115"/>
    </location>
</feature>
<feature type="transmembrane region" description="Helical" evidence="1">
    <location>
        <begin position="143"/>
        <end position="163"/>
    </location>
</feature>
<feature type="transmembrane region" description="Helical" evidence="1">
    <location>
        <begin position="170"/>
        <end position="190"/>
    </location>
</feature>
<feature type="transmembrane region" description="Helical" evidence="1">
    <location>
        <begin position="192"/>
        <end position="212"/>
    </location>
</feature>
<feature type="transmembrane region" description="Helical" evidence="1">
    <location>
        <begin position="224"/>
        <end position="241"/>
    </location>
</feature>
<feature type="transmembrane region" description="Helical" evidence="1">
    <location>
        <begin position="245"/>
        <end position="267"/>
    </location>
</feature>
<feature type="active site" description="Nucleophile" evidence="1">
    <location>
        <position position="202"/>
    </location>
</feature>
<feature type="active site" evidence="1">
    <location>
        <position position="255"/>
    </location>
</feature>
<organism>
    <name type="scientific">Serratia proteamaculans (strain 568)</name>
    <dbReference type="NCBI Taxonomy" id="399741"/>
    <lineage>
        <taxon>Bacteria</taxon>
        <taxon>Pseudomonadati</taxon>
        <taxon>Pseudomonadota</taxon>
        <taxon>Gammaproteobacteria</taxon>
        <taxon>Enterobacterales</taxon>
        <taxon>Yersiniaceae</taxon>
        <taxon>Serratia</taxon>
    </lineage>
</organism>
<comment type="function">
    <text evidence="1">Rhomboid-type serine protease that catalyzes intramembrane proteolysis.</text>
</comment>
<comment type="catalytic activity">
    <reaction evidence="1">
        <text>Cleaves type-1 transmembrane domains using a catalytic dyad composed of serine and histidine that are contributed by different transmembrane domains.</text>
        <dbReference type="EC" id="3.4.21.105"/>
    </reaction>
</comment>
<comment type="subcellular location">
    <subcellularLocation>
        <location evidence="1">Cell inner membrane</location>
        <topology evidence="1">Multi-pass membrane protein</topology>
    </subcellularLocation>
</comment>
<comment type="similarity">
    <text evidence="1">Belongs to the peptidase S54 family.</text>
</comment>
<sequence>MVRVIAVSNPRLAQAFVDYMTTQGIELRVHNTGEAAEIWLADDSHLEQVQHELQQFLIDPLNSRYRAASWQAGNTDADLHYQGFSYLQTLRSKAGPLTLGVMALCIVVYILMQILGDDTLMYWLSWPQDSSQYLQLWRWVSHAFLHFSLLHITFNLLWWWYLGGPLEKRLGSGKLFVLAVVSAFFSGWAQSLFSGALFGGLSGVVYALMGYCWLSGERAPERGLMLPRGLMVFSVLWLVAGYFDILGMSIANAAHVAGLVLGLLMAFWDTRHRAHNEQ</sequence>
<dbReference type="EC" id="3.4.21.105" evidence="1"/>
<dbReference type="EMBL" id="CP000826">
    <property type="protein sequence ID" value="ABV43732.1"/>
    <property type="molecule type" value="Genomic_DNA"/>
</dbReference>
<dbReference type="SMR" id="A8GKU2"/>
<dbReference type="STRING" id="399741.Spro_4639"/>
<dbReference type="MEROPS" id="S54.016"/>
<dbReference type="KEGG" id="spe:Spro_4639"/>
<dbReference type="eggNOG" id="COG0705">
    <property type="taxonomic scope" value="Bacteria"/>
</dbReference>
<dbReference type="HOGENOM" id="CLU_058989_0_0_6"/>
<dbReference type="OrthoDB" id="9778341at2"/>
<dbReference type="GO" id="GO:0005886">
    <property type="term" value="C:plasma membrane"/>
    <property type="evidence" value="ECO:0007669"/>
    <property type="project" value="UniProtKB-SubCell"/>
</dbReference>
<dbReference type="GO" id="GO:0004252">
    <property type="term" value="F:serine-type endopeptidase activity"/>
    <property type="evidence" value="ECO:0007669"/>
    <property type="project" value="UniProtKB-UniRule"/>
</dbReference>
<dbReference type="GO" id="GO:0006508">
    <property type="term" value="P:proteolysis"/>
    <property type="evidence" value="ECO:0007669"/>
    <property type="project" value="UniProtKB-UniRule"/>
</dbReference>
<dbReference type="Gene3D" id="3.30.70.2350">
    <property type="match status" value="1"/>
</dbReference>
<dbReference type="Gene3D" id="1.20.1540.10">
    <property type="entry name" value="Rhomboid-like"/>
    <property type="match status" value="1"/>
</dbReference>
<dbReference type="HAMAP" id="MF_01594">
    <property type="entry name" value="Rhomboid_GlpG"/>
    <property type="match status" value="1"/>
</dbReference>
<dbReference type="InterPro" id="IPR038236">
    <property type="entry name" value="GlpG_N_sf"/>
</dbReference>
<dbReference type="InterPro" id="IPR022732">
    <property type="entry name" value="Peptidase_S54_GlpG_N"/>
</dbReference>
<dbReference type="InterPro" id="IPR022764">
    <property type="entry name" value="Peptidase_S54_rhomboid_dom"/>
</dbReference>
<dbReference type="InterPro" id="IPR035952">
    <property type="entry name" value="Rhomboid-like_sf"/>
</dbReference>
<dbReference type="InterPro" id="IPR023662">
    <property type="entry name" value="Rhomboid_protease_GlpG"/>
</dbReference>
<dbReference type="NCBIfam" id="NF008155">
    <property type="entry name" value="PRK10907.1"/>
    <property type="match status" value="1"/>
</dbReference>
<dbReference type="NCBIfam" id="TIGR04239">
    <property type="entry name" value="rhombo_GlpG"/>
    <property type="match status" value="1"/>
</dbReference>
<dbReference type="PANTHER" id="PTHR43066:SF26">
    <property type="entry name" value="RHOMBOID PROTEASE GLPG"/>
    <property type="match status" value="1"/>
</dbReference>
<dbReference type="PANTHER" id="PTHR43066">
    <property type="entry name" value="RHOMBOID-RELATED PROTEIN"/>
    <property type="match status" value="1"/>
</dbReference>
<dbReference type="Pfam" id="PF01694">
    <property type="entry name" value="Rhomboid"/>
    <property type="match status" value="1"/>
</dbReference>
<dbReference type="Pfam" id="PF12122">
    <property type="entry name" value="Rhomboid_N"/>
    <property type="match status" value="1"/>
</dbReference>
<dbReference type="SUPFAM" id="SSF144091">
    <property type="entry name" value="Rhomboid-like"/>
    <property type="match status" value="1"/>
</dbReference>
<gene>
    <name evidence="1" type="primary">glpG</name>
    <name type="ordered locus">Spro_4639</name>
</gene>
<evidence type="ECO:0000255" key="1">
    <source>
        <dbReference type="HAMAP-Rule" id="MF_01594"/>
    </source>
</evidence>
<keyword id="KW-0997">Cell inner membrane</keyword>
<keyword id="KW-1003">Cell membrane</keyword>
<keyword id="KW-0378">Hydrolase</keyword>
<keyword id="KW-0472">Membrane</keyword>
<keyword id="KW-0645">Protease</keyword>
<keyword id="KW-0720">Serine protease</keyword>
<keyword id="KW-0812">Transmembrane</keyword>
<keyword id="KW-1133">Transmembrane helix</keyword>
<accession>A8GKU2</accession>
<name>GLPG_SERP5</name>
<protein>
    <recommendedName>
        <fullName evidence="1">Rhomboid protease GlpG</fullName>
        <ecNumber evidence="1">3.4.21.105</ecNumber>
    </recommendedName>
    <alternativeName>
        <fullName evidence="1">Intramembrane serine protease</fullName>
    </alternativeName>
</protein>
<proteinExistence type="inferred from homology"/>